<keyword id="KW-0067">ATP-binding</keyword>
<keyword id="KW-0963">Cytoplasm</keyword>
<keyword id="KW-0418">Kinase</keyword>
<keyword id="KW-0547">Nucleotide-binding</keyword>
<keyword id="KW-0808">Transferase</keyword>
<evidence type="ECO:0000255" key="1">
    <source>
        <dbReference type="HAMAP-Rule" id="MF_00328"/>
    </source>
</evidence>
<evidence type="ECO:0000305" key="2"/>
<reference key="1">
    <citation type="journal article" date="2002" name="Proc. Natl. Acad. Sci. U.S.A.">
        <title>The genome sequence of the facultative intracellular pathogen Brucella melitensis.</title>
        <authorList>
            <person name="DelVecchio V.G."/>
            <person name="Kapatral V."/>
            <person name="Redkar R.J."/>
            <person name="Patra G."/>
            <person name="Mujer C."/>
            <person name="Los T."/>
            <person name="Ivanova N."/>
            <person name="Anderson I."/>
            <person name="Bhattacharyya A."/>
            <person name="Lykidis A."/>
            <person name="Reznik G."/>
            <person name="Jablonski L."/>
            <person name="Larsen N."/>
            <person name="D'Souza M."/>
            <person name="Bernal A."/>
            <person name="Mazur M."/>
            <person name="Goltsman E."/>
            <person name="Selkov E."/>
            <person name="Elzer P.H."/>
            <person name="Hagius S."/>
            <person name="O'Callaghan D."/>
            <person name="Letesson J.-J."/>
            <person name="Haselkorn R."/>
            <person name="Kyrpides N.C."/>
            <person name="Overbeek R."/>
        </authorList>
    </citation>
    <scope>NUCLEOTIDE SEQUENCE [LARGE SCALE GENOMIC DNA]</scope>
    <source>
        <strain>ATCC 23456 / CCUG 17765 / NCTC 10094 / 16M</strain>
    </source>
</reference>
<organism>
    <name type="scientific">Brucella melitensis biotype 1 (strain ATCC 23456 / CCUG 17765 / NCTC 10094 / 16M)</name>
    <dbReference type="NCBI Taxonomy" id="224914"/>
    <lineage>
        <taxon>Bacteria</taxon>
        <taxon>Pseudomonadati</taxon>
        <taxon>Pseudomonadota</taxon>
        <taxon>Alphaproteobacteria</taxon>
        <taxon>Hyphomicrobiales</taxon>
        <taxon>Brucellaceae</taxon>
        <taxon>Brucella/Ochrobactrum group</taxon>
        <taxon>Brucella</taxon>
    </lineage>
</organism>
<comment type="function">
    <text evidence="1">Essential for recycling GMP and indirectly, cGMP.</text>
</comment>
<comment type="catalytic activity">
    <reaction evidence="1">
        <text>GMP + ATP = GDP + ADP</text>
        <dbReference type="Rhea" id="RHEA:20780"/>
        <dbReference type="ChEBI" id="CHEBI:30616"/>
        <dbReference type="ChEBI" id="CHEBI:58115"/>
        <dbReference type="ChEBI" id="CHEBI:58189"/>
        <dbReference type="ChEBI" id="CHEBI:456216"/>
        <dbReference type="EC" id="2.7.4.8"/>
    </reaction>
</comment>
<comment type="subcellular location">
    <subcellularLocation>
        <location evidence="1">Cytoplasm</location>
    </subcellularLocation>
</comment>
<comment type="similarity">
    <text evidence="1">Belongs to the guanylate kinase family.</text>
</comment>
<comment type="sequence caution" evidence="2">
    <conflict type="erroneous initiation">
        <sequence resource="EMBL-CDS" id="AAL52650"/>
    </conflict>
</comment>
<accession>P65217</accession>
<accession>Q8YFQ1</accession>
<sequence>MAISSVENGVARRGLMVVISSPSGAGKSTIARLLLEDPKMKLSLSISVTTRQRRPSEIDGVHYHFITIREFERLRDNDELIEWAEVHGNFYGTLRETAEIALADGQDMLFDIDWQGADQLQAKMPADVVSIFILPPTMRELQQRLNRRAEDTAEVIETRLQNARFEIQKWVKYDYIVINEDLDRSYAAIKSIINAERLRRDRRPGLFDFVTGLLEEDPGM</sequence>
<feature type="chain" id="PRO_0000170508" description="Guanylate kinase">
    <location>
        <begin position="1"/>
        <end position="220"/>
    </location>
</feature>
<feature type="domain" description="Guanylate kinase-like" evidence="1">
    <location>
        <begin position="14"/>
        <end position="194"/>
    </location>
</feature>
<feature type="binding site" evidence="1">
    <location>
        <begin position="21"/>
        <end position="28"/>
    </location>
    <ligand>
        <name>ATP</name>
        <dbReference type="ChEBI" id="CHEBI:30616"/>
    </ligand>
</feature>
<proteinExistence type="inferred from homology"/>
<gene>
    <name evidence="1" type="primary">gmk</name>
    <name type="ordered locus">BMEI1469</name>
</gene>
<protein>
    <recommendedName>
        <fullName evidence="1">Guanylate kinase</fullName>
        <ecNumber evidence="1">2.7.4.8</ecNumber>
    </recommendedName>
    <alternativeName>
        <fullName evidence="1">GMP kinase</fullName>
    </alternativeName>
</protein>
<dbReference type="EC" id="2.7.4.8" evidence="1"/>
<dbReference type="EMBL" id="AE008917">
    <property type="protein sequence ID" value="AAL52650.1"/>
    <property type="status" value="ALT_INIT"/>
    <property type="molecule type" value="Genomic_DNA"/>
</dbReference>
<dbReference type="PIR" id="AG3435">
    <property type="entry name" value="AG3435"/>
</dbReference>
<dbReference type="RefSeq" id="WP_002963622.1">
    <property type="nucleotide sequence ID" value="NZ_GG703778.1"/>
</dbReference>
<dbReference type="SMR" id="P65217"/>
<dbReference type="GeneID" id="97534168"/>
<dbReference type="KEGG" id="bme:BMEI1469"/>
<dbReference type="eggNOG" id="COG0194">
    <property type="taxonomic scope" value="Bacteria"/>
</dbReference>
<dbReference type="Proteomes" id="UP000000419">
    <property type="component" value="Chromosome I"/>
</dbReference>
<dbReference type="GO" id="GO:0005829">
    <property type="term" value="C:cytosol"/>
    <property type="evidence" value="ECO:0007669"/>
    <property type="project" value="TreeGrafter"/>
</dbReference>
<dbReference type="GO" id="GO:0005524">
    <property type="term" value="F:ATP binding"/>
    <property type="evidence" value="ECO:0007669"/>
    <property type="project" value="UniProtKB-UniRule"/>
</dbReference>
<dbReference type="GO" id="GO:0004385">
    <property type="term" value="F:guanylate kinase activity"/>
    <property type="evidence" value="ECO:0007669"/>
    <property type="project" value="UniProtKB-UniRule"/>
</dbReference>
<dbReference type="CDD" id="cd00071">
    <property type="entry name" value="GMPK"/>
    <property type="match status" value="1"/>
</dbReference>
<dbReference type="FunFam" id="3.30.63.10:FF:000005">
    <property type="entry name" value="Guanylate kinase"/>
    <property type="match status" value="1"/>
</dbReference>
<dbReference type="Gene3D" id="3.30.63.10">
    <property type="entry name" value="Guanylate Kinase phosphate binding domain"/>
    <property type="match status" value="1"/>
</dbReference>
<dbReference type="Gene3D" id="3.40.50.300">
    <property type="entry name" value="P-loop containing nucleotide triphosphate hydrolases"/>
    <property type="match status" value="1"/>
</dbReference>
<dbReference type="HAMAP" id="MF_00328">
    <property type="entry name" value="Guanylate_kinase"/>
    <property type="match status" value="1"/>
</dbReference>
<dbReference type="InterPro" id="IPR008145">
    <property type="entry name" value="GK/Ca_channel_bsu"/>
</dbReference>
<dbReference type="InterPro" id="IPR008144">
    <property type="entry name" value="Guanylate_kin-like_dom"/>
</dbReference>
<dbReference type="InterPro" id="IPR017665">
    <property type="entry name" value="Guanylate_kinase"/>
</dbReference>
<dbReference type="InterPro" id="IPR020590">
    <property type="entry name" value="Guanylate_kinase_CS"/>
</dbReference>
<dbReference type="InterPro" id="IPR027417">
    <property type="entry name" value="P-loop_NTPase"/>
</dbReference>
<dbReference type="NCBIfam" id="TIGR03263">
    <property type="entry name" value="guanyl_kin"/>
    <property type="match status" value="1"/>
</dbReference>
<dbReference type="PANTHER" id="PTHR23117:SF13">
    <property type="entry name" value="GUANYLATE KINASE"/>
    <property type="match status" value="1"/>
</dbReference>
<dbReference type="PANTHER" id="PTHR23117">
    <property type="entry name" value="GUANYLATE KINASE-RELATED"/>
    <property type="match status" value="1"/>
</dbReference>
<dbReference type="Pfam" id="PF00625">
    <property type="entry name" value="Guanylate_kin"/>
    <property type="match status" value="1"/>
</dbReference>
<dbReference type="SMART" id="SM00072">
    <property type="entry name" value="GuKc"/>
    <property type="match status" value="1"/>
</dbReference>
<dbReference type="SUPFAM" id="SSF52540">
    <property type="entry name" value="P-loop containing nucleoside triphosphate hydrolases"/>
    <property type="match status" value="1"/>
</dbReference>
<dbReference type="PROSITE" id="PS00856">
    <property type="entry name" value="GUANYLATE_KINASE_1"/>
    <property type="match status" value="1"/>
</dbReference>
<dbReference type="PROSITE" id="PS50052">
    <property type="entry name" value="GUANYLATE_KINASE_2"/>
    <property type="match status" value="1"/>
</dbReference>
<name>KGUA_BRUME</name>